<evidence type="ECO:0000255" key="1">
    <source>
        <dbReference type="HAMAP-Rule" id="MF_00544"/>
    </source>
</evidence>
<comment type="catalytic activity">
    <reaction evidence="1">
        <text>L-tryptophan + H2O = indole + pyruvate + NH4(+)</text>
        <dbReference type="Rhea" id="RHEA:19553"/>
        <dbReference type="ChEBI" id="CHEBI:15361"/>
        <dbReference type="ChEBI" id="CHEBI:15377"/>
        <dbReference type="ChEBI" id="CHEBI:16881"/>
        <dbReference type="ChEBI" id="CHEBI:28938"/>
        <dbReference type="ChEBI" id="CHEBI:57912"/>
        <dbReference type="EC" id="4.1.99.1"/>
    </reaction>
</comment>
<comment type="cofactor">
    <cofactor evidence="1">
        <name>pyridoxal 5'-phosphate</name>
        <dbReference type="ChEBI" id="CHEBI:597326"/>
    </cofactor>
</comment>
<comment type="pathway">
    <text evidence="1">Amino-acid degradation; L-tryptophan degradation via pyruvate pathway; indole and pyruvate from L-tryptophan: step 1/1.</text>
</comment>
<comment type="subunit">
    <text evidence="1">Homotetramer.</text>
</comment>
<comment type="similarity">
    <text evidence="1">Belongs to the beta-eliminating lyase family.</text>
</comment>
<dbReference type="EC" id="4.1.99.1" evidence="1"/>
<dbReference type="EMBL" id="CU928161">
    <property type="protein sequence ID" value="CAR05337.1"/>
    <property type="molecule type" value="Genomic_DNA"/>
</dbReference>
<dbReference type="RefSeq" id="WP_001295247.1">
    <property type="nucleotide sequence ID" value="NC_011742.1"/>
</dbReference>
<dbReference type="SMR" id="B7MGC9"/>
<dbReference type="GeneID" id="75205423"/>
<dbReference type="KEGG" id="ecz:ECS88_4131"/>
<dbReference type="HOGENOM" id="CLU_047223_0_0_6"/>
<dbReference type="UniPathway" id="UPA00332">
    <property type="reaction ID" value="UER00452"/>
</dbReference>
<dbReference type="Proteomes" id="UP000000747">
    <property type="component" value="Chromosome"/>
</dbReference>
<dbReference type="GO" id="GO:0009034">
    <property type="term" value="F:tryptophanase activity"/>
    <property type="evidence" value="ECO:0007669"/>
    <property type="project" value="UniProtKB-UniRule"/>
</dbReference>
<dbReference type="FunFam" id="3.40.640.10:FF:000039">
    <property type="entry name" value="Tryptophanase"/>
    <property type="match status" value="1"/>
</dbReference>
<dbReference type="Gene3D" id="3.90.1150.10">
    <property type="entry name" value="Aspartate Aminotransferase, domain 1"/>
    <property type="match status" value="1"/>
</dbReference>
<dbReference type="Gene3D" id="3.40.640.10">
    <property type="entry name" value="Type I PLP-dependent aspartate aminotransferase-like (Major domain)"/>
    <property type="match status" value="1"/>
</dbReference>
<dbReference type="HAMAP" id="MF_00544">
    <property type="entry name" value="Tryptophanase"/>
    <property type="match status" value="1"/>
</dbReference>
<dbReference type="InterPro" id="IPR001597">
    <property type="entry name" value="ArAA_b-elim_lyase/Thr_aldolase"/>
</dbReference>
<dbReference type="InterPro" id="IPR011166">
    <property type="entry name" value="Beta-eliminating_lyase"/>
</dbReference>
<dbReference type="InterPro" id="IPR015424">
    <property type="entry name" value="PyrdxlP-dep_Trfase"/>
</dbReference>
<dbReference type="InterPro" id="IPR015421">
    <property type="entry name" value="PyrdxlP-dep_Trfase_major"/>
</dbReference>
<dbReference type="InterPro" id="IPR015422">
    <property type="entry name" value="PyrdxlP-dep_Trfase_small"/>
</dbReference>
<dbReference type="InterPro" id="IPR013440">
    <property type="entry name" value="TNase"/>
</dbReference>
<dbReference type="InterPro" id="IPR018176">
    <property type="entry name" value="Tryptophanase_CS"/>
</dbReference>
<dbReference type="NCBIfam" id="NF009709">
    <property type="entry name" value="PRK13238.1"/>
    <property type="match status" value="1"/>
</dbReference>
<dbReference type="NCBIfam" id="TIGR02617">
    <property type="entry name" value="tnaA_trp_ase"/>
    <property type="match status" value="1"/>
</dbReference>
<dbReference type="PANTHER" id="PTHR32325">
    <property type="entry name" value="BETA-ELIMINATING LYASE-LIKE PROTEIN-RELATED"/>
    <property type="match status" value="1"/>
</dbReference>
<dbReference type="PANTHER" id="PTHR32325:SF4">
    <property type="entry name" value="TRYPTOPHANASE"/>
    <property type="match status" value="1"/>
</dbReference>
<dbReference type="Pfam" id="PF01212">
    <property type="entry name" value="Beta_elim_lyase"/>
    <property type="match status" value="1"/>
</dbReference>
<dbReference type="PIRSF" id="PIRSF001386">
    <property type="entry name" value="Trpase"/>
    <property type="match status" value="1"/>
</dbReference>
<dbReference type="SUPFAM" id="SSF53383">
    <property type="entry name" value="PLP-dependent transferases"/>
    <property type="match status" value="1"/>
</dbReference>
<dbReference type="PROSITE" id="PS00853">
    <property type="entry name" value="BETA_ELIM_LYASE"/>
    <property type="match status" value="1"/>
</dbReference>
<name>TNAA_ECO45</name>
<organism>
    <name type="scientific">Escherichia coli O45:K1 (strain S88 / ExPEC)</name>
    <dbReference type="NCBI Taxonomy" id="585035"/>
    <lineage>
        <taxon>Bacteria</taxon>
        <taxon>Pseudomonadati</taxon>
        <taxon>Pseudomonadota</taxon>
        <taxon>Gammaproteobacteria</taxon>
        <taxon>Enterobacterales</taxon>
        <taxon>Enterobacteriaceae</taxon>
        <taxon>Escherichia</taxon>
    </lineage>
</organism>
<sequence length="471" mass="52773">MENFKHLPEPFRIRVIEPVKRTTRAYREEAIIKSGMNPFLLDSEDVFIDLLTDSGTGAVTQSMQAAMMRGDEAYSGSRSYYALAESVKNIFGYQYTIPTHQGRGAEQIYIPVLIKKREQEKGLDRSKMVAFSNYFFDTTQGHSQINGCTVRNVYIKEAFDTGVRYDFKGNFDLEGLERGIEEVGPNNVPYIVATITSNSAGGQPVSLANLKAMYSIAKKYDIPVVMDSARFAENAYFIKQREAEYKDWTIEQITRETYKYADMLAMSAKKDAMVPMGGLLCMKDDSFFDVYTECRTLCVVQEGFPTYGGLEGGAMERLAVGLYDGMNLDWLAYRIAQVQYLVDGLEEIGVVCQQAGGHAAFVDAGKLLPHIPADQFPAQALACELYKVAGIRAVEIGSFLLGRDPKTGKQLPCPAELLRLTIPRATYTQTHMDFIIEAFKHVKENAANIKGLTFTYEPKVLRHFTAKLKEV</sequence>
<accession>B7MGC9</accession>
<keyword id="KW-0007">Acetylation</keyword>
<keyword id="KW-0456">Lyase</keyword>
<keyword id="KW-0663">Pyridoxal phosphate</keyword>
<keyword id="KW-1185">Reference proteome</keyword>
<keyword id="KW-0823">Tryptophan catabolism</keyword>
<reference key="1">
    <citation type="journal article" date="2009" name="PLoS Genet.">
        <title>Organised genome dynamics in the Escherichia coli species results in highly diverse adaptive paths.</title>
        <authorList>
            <person name="Touchon M."/>
            <person name="Hoede C."/>
            <person name="Tenaillon O."/>
            <person name="Barbe V."/>
            <person name="Baeriswyl S."/>
            <person name="Bidet P."/>
            <person name="Bingen E."/>
            <person name="Bonacorsi S."/>
            <person name="Bouchier C."/>
            <person name="Bouvet O."/>
            <person name="Calteau A."/>
            <person name="Chiapello H."/>
            <person name="Clermont O."/>
            <person name="Cruveiller S."/>
            <person name="Danchin A."/>
            <person name="Diard M."/>
            <person name="Dossat C."/>
            <person name="Karoui M.E."/>
            <person name="Frapy E."/>
            <person name="Garry L."/>
            <person name="Ghigo J.M."/>
            <person name="Gilles A.M."/>
            <person name="Johnson J."/>
            <person name="Le Bouguenec C."/>
            <person name="Lescat M."/>
            <person name="Mangenot S."/>
            <person name="Martinez-Jehanne V."/>
            <person name="Matic I."/>
            <person name="Nassif X."/>
            <person name="Oztas S."/>
            <person name="Petit M.A."/>
            <person name="Pichon C."/>
            <person name="Rouy Z."/>
            <person name="Ruf C.S."/>
            <person name="Schneider D."/>
            <person name="Tourret J."/>
            <person name="Vacherie B."/>
            <person name="Vallenet D."/>
            <person name="Medigue C."/>
            <person name="Rocha E.P.C."/>
            <person name="Denamur E."/>
        </authorList>
    </citation>
    <scope>NUCLEOTIDE SEQUENCE [LARGE SCALE GENOMIC DNA]</scope>
    <source>
        <strain>S88 / ExPEC</strain>
    </source>
</reference>
<protein>
    <recommendedName>
        <fullName evidence="1">Tryptophanase</fullName>
        <ecNumber evidence="1">4.1.99.1</ecNumber>
    </recommendedName>
    <alternativeName>
        <fullName evidence="1">L-tryptophan indole-lyase</fullName>
        <shortName evidence="1">TNase</shortName>
    </alternativeName>
</protein>
<proteinExistence type="inferred from homology"/>
<feature type="chain" id="PRO_1000128906" description="Tryptophanase">
    <location>
        <begin position="1"/>
        <end position="471"/>
    </location>
</feature>
<feature type="modified residue" description="N6-acetyllysine" evidence="1">
    <location>
        <position position="5"/>
    </location>
</feature>
<feature type="modified residue" description="N6-acetyllysine" evidence="1">
    <location>
        <position position="115"/>
    </location>
</feature>
<feature type="modified residue" description="N6-acetyllysine" evidence="1">
    <location>
        <position position="156"/>
    </location>
</feature>
<feature type="modified residue" description="N6-(pyridoxal phosphate)lysine" evidence="1">
    <location>
        <position position="270"/>
    </location>
</feature>
<feature type="modified residue" description="N6-acetyllysine" evidence="1">
    <location>
        <position position="450"/>
    </location>
</feature>
<gene>
    <name evidence="1" type="primary">tnaA</name>
    <name type="ordered locus">ECS88_4131</name>
</gene>